<comment type="function">
    <text evidence="4 5 6 8">Avirulence protein. Acts as a transcription factor in rice, inducing expression of a number of host genes including SWEET11 (Os8N3, XA13, AC Q6YZF3) in susceptible plants with the Xa13 allele. Plants with the xa13 allele, which has an altered promoter, are resistant to bacterial blight caused by this bacterial strain and do not induce SWEET11. The xa13 allele elicits an atypical hypersensitive response (HR). PthXo1 binds SWEET11 promoter DNA in a sequence-specific manner.</text>
</comment>
<comment type="subcellular location">
    <subcellularLocation>
        <location evidence="1">Secreted</location>
    </subcellularLocation>
    <subcellularLocation>
        <location evidence="1">Host nucleus</location>
    </subcellularLocation>
    <text evidence="1">Secreted via a type III secretions system (T3SS). Localizes to the plant cell nucleus.</text>
</comment>
<comment type="domain">
    <text evidence="8">The central DNA-binding region is composed of 23.5 tandem core repeats with 1 base-specifying residue (BSR residue 13, also called the repeat variable diresidue, RVD, residues 12 and 13) each of which recognizes 1 base in the target DNA. The BSR is the only residue which contacts DNA in a sequence-specific manner.</text>
</comment>
<comment type="disruption phenotype">
    <text evidence="4 5">Reduced virulence in susceptible rice; its introduction into a deletion mutant restores virulence to the bacteria in rice plants. No longer induces SWEET11 (Os8N3, XA13, AC Q6YZF3).</text>
</comment>
<comment type="biotechnology">
    <text evidence="7 12 13">By combining the central DNA-binding domain with the catalytic domain of the restriction endonuclease FokI, TALE-nuclease (TALEN) enzymes able to target specific dsDNA sequences can be created that enable eukaryotic genome modification. Other potential uses as transcriptional repressors, for transposon targeting, DNA methylation or histone tail modifictions are also possible.</text>
</comment>
<comment type="similarity">
    <text evidence="14">Belongs to the transcription activator-like effector (TALE) family.</text>
</comment>
<dbReference type="EMBL" id="CP000967">
    <property type="protein sequence ID" value="ACD58243.2"/>
    <property type="molecule type" value="Genomic_DNA"/>
</dbReference>
<dbReference type="EMBL" id="AY495676">
    <property type="protein sequence ID" value="AAS46025.1"/>
    <property type="molecule type" value="Genomic_DNA"/>
</dbReference>
<dbReference type="RefSeq" id="WP_041182630.1">
    <property type="nucleotide sequence ID" value="NC_010717.2"/>
</dbReference>
<dbReference type="PDB" id="3UGM">
    <property type="method" value="X-ray"/>
    <property type="resolution" value="3.00 A"/>
    <property type="chains" value="A=127-1149"/>
</dbReference>
<dbReference type="PDBsum" id="3UGM"/>
<dbReference type="SMR" id="B2SU53"/>
<dbReference type="KEGG" id="xop:PXO_00227"/>
<dbReference type="eggNOG" id="COG2201">
    <property type="taxonomic scope" value="Bacteria"/>
</dbReference>
<dbReference type="HOGENOM" id="CLU_003229_1_0_6"/>
<dbReference type="EvolutionaryTrace" id="B2SU53"/>
<dbReference type="PHI-base" id="PHI:10681"/>
<dbReference type="PHI-base" id="PHI:2718"/>
<dbReference type="PHI-base" id="PHI:6182"/>
<dbReference type="PHI-base" id="PHI:8171"/>
<dbReference type="PHI-base" id="PHI:8686"/>
<dbReference type="Proteomes" id="UP000001740">
    <property type="component" value="Chromosome"/>
</dbReference>
<dbReference type="GO" id="GO:0005576">
    <property type="term" value="C:extracellular region"/>
    <property type="evidence" value="ECO:0007669"/>
    <property type="project" value="UniProtKB-SubCell"/>
</dbReference>
<dbReference type="GO" id="GO:0042025">
    <property type="term" value="C:host cell nucleus"/>
    <property type="evidence" value="ECO:0007669"/>
    <property type="project" value="UniProtKB-SubCell"/>
</dbReference>
<dbReference type="GO" id="GO:0003677">
    <property type="term" value="F:DNA binding"/>
    <property type="evidence" value="ECO:0007669"/>
    <property type="project" value="UniProtKB-KW"/>
</dbReference>
<dbReference type="GO" id="GO:0052040">
    <property type="term" value="P:symbiont-mediated perturbation of host programmed cell death"/>
    <property type="evidence" value="ECO:0007669"/>
    <property type="project" value="UniProtKB-KW"/>
</dbReference>
<dbReference type="Gene3D" id="6.10.140.500">
    <property type="match status" value="14"/>
</dbReference>
<dbReference type="InterPro" id="IPR005042">
    <property type="entry name" value="TAL_effector_rpt"/>
</dbReference>
<dbReference type="InterPro" id="IPR053450">
    <property type="entry name" value="TALE"/>
</dbReference>
<dbReference type="NCBIfam" id="NF041308">
    <property type="entry name" value="AvrBs3"/>
    <property type="match status" value="2"/>
</dbReference>
<dbReference type="Pfam" id="PF03377">
    <property type="entry name" value="TAL_effector"/>
    <property type="match status" value="25"/>
</dbReference>
<proteinExistence type="evidence at protein level"/>
<evidence type="ECO:0000250" key="1">
    <source>
        <dbReference type="UniProtKB" id="P14727"/>
    </source>
</evidence>
<evidence type="ECO:0000255" key="2"/>
<evidence type="ECO:0000256" key="3">
    <source>
        <dbReference type="SAM" id="MobiDB-lite"/>
    </source>
</evidence>
<evidence type="ECO:0000269" key="4">
    <source>
    </source>
</evidence>
<evidence type="ECO:0000269" key="5">
    <source>
    </source>
</evidence>
<evidence type="ECO:0000269" key="6">
    <source>
    </source>
</evidence>
<evidence type="ECO:0000269" key="7">
    <source>
    </source>
</evidence>
<evidence type="ECO:0000269" key="8">
    <source>
    </source>
</evidence>
<evidence type="ECO:0000303" key="9">
    <source>
    </source>
</evidence>
<evidence type="ECO:0000303" key="10">
    <source>
    </source>
</evidence>
<evidence type="ECO:0000303" key="11">
    <source>
    </source>
</evidence>
<evidence type="ECO:0000303" key="12">
    <source>
    </source>
</evidence>
<evidence type="ECO:0000303" key="13">
    <source>
    </source>
</evidence>
<evidence type="ECO:0000305" key="14"/>
<evidence type="ECO:0007829" key="15">
    <source>
        <dbReference type="PDB" id="3UGM"/>
    </source>
</evidence>
<feature type="chain" id="PRO_0000430621" description="TAL effector protein PthXo1">
    <location>
        <begin position="1"/>
        <end position="1373"/>
    </location>
</feature>
<feature type="repeat" description="Cryptic repeat -1" evidence="11">
    <location>
        <begin position="221"/>
        <end position="239"/>
    </location>
</feature>
<feature type="repeat" description="Cryptic repeat 0" evidence="11">
    <location>
        <begin position="256"/>
        <end position="273"/>
    </location>
</feature>
<feature type="repeat" description="Core repeat 1" evidence="9">
    <location>
        <begin position="289"/>
        <end position="322"/>
    </location>
</feature>
<feature type="repeat" description="Core repeat 2" evidence="9">
    <location>
        <begin position="323"/>
        <end position="356"/>
    </location>
</feature>
<feature type="repeat" description="Core repeat 3" evidence="9">
    <location>
        <begin position="357"/>
        <end position="390"/>
    </location>
</feature>
<feature type="repeat" description="Core repeat 4" evidence="9">
    <location>
        <begin position="391"/>
        <end position="424"/>
    </location>
</feature>
<feature type="repeat" description="Core repeat 5" evidence="9">
    <location>
        <begin position="425"/>
        <end position="458"/>
    </location>
</feature>
<feature type="repeat" description="Core repeat 6" evidence="9">
    <location>
        <begin position="459"/>
        <end position="492"/>
    </location>
</feature>
<feature type="repeat" description="Core repeat 7" evidence="9">
    <location>
        <begin position="493"/>
        <end position="525"/>
    </location>
</feature>
<feature type="repeat" description="Core repeat 8" evidence="9">
    <location>
        <begin position="526"/>
        <end position="559"/>
    </location>
</feature>
<feature type="repeat" description="Core repeat 9" evidence="9">
    <location>
        <begin position="560"/>
        <end position="593"/>
    </location>
</feature>
<feature type="repeat" description="Core repeat 10" evidence="9">
    <location>
        <begin position="594"/>
        <end position="627"/>
    </location>
</feature>
<feature type="repeat" description="Core repeat 11" evidence="9">
    <location>
        <begin position="628"/>
        <end position="661"/>
    </location>
</feature>
<feature type="repeat" description="Core repeat 12" evidence="9">
    <location>
        <begin position="662"/>
        <end position="695"/>
    </location>
</feature>
<feature type="repeat" description="Core repeat 13" evidence="9">
    <location>
        <begin position="696"/>
        <end position="729"/>
    </location>
</feature>
<feature type="repeat" description="HEAT 1" evidence="2">
    <location>
        <begin position="714"/>
        <end position="760"/>
    </location>
</feature>
<feature type="repeat" description="Core repeat 14" evidence="9">
    <location>
        <begin position="730"/>
        <end position="763"/>
    </location>
</feature>
<feature type="repeat" description="Core repeat 15" evidence="9">
    <location>
        <begin position="764"/>
        <end position="797"/>
    </location>
</feature>
<feature type="repeat" description="HEAT 2" evidence="2">
    <location>
        <begin position="782"/>
        <end position="828"/>
    </location>
</feature>
<feature type="repeat" description="Core repeat 16" evidence="9">
    <location>
        <begin position="798"/>
        <end position="831"/>
    </location>
</feature>
<feature type="repeat" description="Core repeat 17" evidence="9">
    <location>
        <begin position="832"/>
        <end position="865"/>
    </location>
</feature>
<feature type="repeat" description="HEAT 3" evidence="2">
    <location>
        <begin position="850"/>
        <end position="893"/>
    </location>
</feature>
<feature type="repeat" description="Core repeat 18" evidence="9">
    <location>
        <begin position="866"/>
        <end position="899"/>
    </location>
</feature>
<feature type="repeat" description="Core repeat 19" evidence="9">
    <location>
        <begin position="900"/>
        <end position="933"/>
    </location>
</feature>
<feature type="repeat" description="HEAT 4" evidence="2">
    <location>
        <begin position="918"/>
        <end position="961"/>
    </location>
</feature>
<feature type="repeat" description="Core repeat 20" evidence="9">
    <location>
        <begin position="934"/>
        <end position="967"/>
    </location>
</feature>
<feature type="repeat" description="Core repeat 21" evidence="9">
    <location>
        <begin position="968"/>
        <end position="1001"/>
    </location>
</feature>
<feature type="repeat" description="Core repeat 22" evidence="9">
    <location>
        <begin position="1002"/>
        <end position="1034"/>
    </location>
</feature>
<feature type="repeat" description="Core repeat 23" evidence="9">
    <location>
        <begin position="1035"/>
        <end position="1068"/>
    </location>
</feature>
<feature type="repeat" description="HEAT 5" evidence="2">
    <location>
        <begin position="1053"/>
        <end position="1091"/>
    </location>
</feature>
<feature type="repeat" description="Core repeat 23.5" evidence="9">
    <location>
        <begin position="1069"/>
        <end position="1087"/>
    </location>
</feature>
<feature type="region of interest" description="Disordered" evidence="3">
    <location>
        <begin position="1"/>
        <end position="68"/>
    </location>
</feature>
<feature type="region of interest" description="Disordered" evidence="3">
    <location>
        <begin position="127"/>
        <end position="152"/>
    </location>
</feature>
<feature type="region of interest" description="Acidic activation domain" evidence="1">
    <location>
        <begin position="1136"/>
        <end position="1364"/>
    </location>
</feature>
<feature type="region of interest" description="Disordered" evidence="3">
    <location>
        <begin position="1250"/>
        <end position="1286"/>
    </location>
</feature>
<feature type="short sequence motif" description="Nuclear localization signal NLS1" evidence="1">
    <location>
        <begin position="1222"/>
        <end position="1225"/>
    </location>
</feature>
<feature type="short sequence motif" description="Nuclear localization signal NLS2" evidence="1">
    <location>
        <begin position="1268"/>
        <end position="1271"/>
    </location>
</feature>
<feature type="short sequence motif" description="Nuclear localization signal NLS3" evidence="1">
    <location>
        <begin position="1305"/>
        <end position="1308"/>
    </location>
</feature>
<feature type="compositionally biased region" description="Basic residues" evidence="3">
    <location>
        <begin position="131"/>
        <end position="141"/>
    </location>
</feature>
<feature type="compositionally biased region" description="Low complexity" evidence="3">
    <location>
        <begin position="142"/>
        <end position="152"/>
    </location>
</feature>
<feature type="sequence conflict" description="In Ref. 2; AAS46025." evidence="14" ref="2">
    <original>P</original>
    <variation>T</variation>
    <location>
        <position position="358"/>
    </location>
</feature>
<feature type="sequence conflict" description="In Ref. 2; AAS46025." evidence="14" ref="2">
    <original>M</original>
    <variation>L</variation>
    <location>
        <position position="1120"/>
    </location>
</feature>
<feature type="sequence conflict" description="In Ref. 2; AAS46025." evidence="14" ref="2">
    <original>V</original>
    <variation>I</variation>
    <location>
        <position position="1137"/>
    </location>
</feature>
<feature type="sequence conflict" description="In Ref. 2; AAS46025." evidence="14" ref="2">
    <original>G</original>
    <variation>P</variation>
    <location>
        <position position="1142"/>
    </location>
</feature>
<feature type="sequence conflict" description="In Ref. 2; AAS46025." evidence="14" ref="2">
    <original>ADYAQ</original>
    <variation>PDLAH</variation>
    <location>
        <begin position="1150"/>
        <end position="1154"/>
    </location>
</feature>
<feature type="sequence conflict" description="In Ref. 2; AAS46025." evidence="14" ref="2">
    <original>EFFQC</original>
    <variation>GFFQS</variation>
    <location>
        <begin position="1160"/>
        <end position="1164"/>
    </location>
</feature>
<feature type="sequence conflict" description="In Ref. 2; AAS46025." evidence="14" ref="2">
    <original>YAFDE</original>
    <variation>QAFDD</variation>
    <location>
        <begin position="1170"/>
        <end position="1174"/>
    </location>
</feature>
<feature type="sequence conflict" description="In Ref. 2; AAS46025." evidence="14" ref="2">
    <original>N</original>
    <variation>H</variation>
    <location>
        <position position="1184"/>
    </location>
</feature>
<feature type="sequence conflict" description="In Ref. 2; AAS46025." evidence="14" ref="2">
    <original>LEARG</original>
    <variation>FEARY</variation>
    <location>
        <begin position="1198"/>
        <end position="1202"/>
    </location>
</feature>
<feature type="helix" evidence="15">
    <location>
        <begin position="222"/>
        <end position="228"/>
    </location>
</feature>
<feature type="helix" evidence="15">
    <location>
        <begin position="234"/>
        <end position="245"/>
    </location>
</feature>
<feature type="turn" evidence="15">
    <location>
        <begin position="246"/>
        <end position="252"/>
    </location>
</feature>
<feature type="helix" evidence="15">
    <location>
        <begin position="258"/>
        <end position="266"/>
    </location>
</feature>
<feature type="helix" evidence="15">
    <location>
        <begin position="268"/>
        <end position="282"/>
    </location>
</feature>
<feature type="helix" evidence="15">
    <location>
        <begin position="291"/>
        <end position="298"/>
    </location>
</feature>
<feature type="helix" evidence="15">
    <location>
        <begin position="303"/>
        <end position="313"/>
    </location>
</feature>
<feature type="helix" evidence="15">
    <location>
        <begin position="315"/>
        <end position="319"/>
    </location>
</feature>
<feature type="helix" evidence="15">
    <location>
        <begin position="325"/>
        <end position="328"/>
    </location>
</feature>
<feature type="turn" evidence="15">
    <location>
        <begin position="329"/>
        <end position="333"/>
    </location>
</feature>
<feature type="helix" evidence="15">
    <location>
        <begin position="337"/>
        <end position="354"/>
    </location>
</feature>
<feature type="helix" evidence="15">
    <location>
        <begin position="359"/>
        <end position="366"/>
    </location>
</feature>
<feature type="helix" evidence="15">
    <location>
        <begin position="371"/>
        <end position="381"/>
    </location>
</feature>
<feature type="helix" evidence="15">
    <location>
        <begin position="383"/>
        <end position="389"/>
    </location>
</feature>
<feature type="helix" evidence="15">
    <location>
        <begin position="393"/>
        <end position="400"/>
    </location>
</feature>
<feature type="helix" evidence="15">
    <location>
        <begin position="405"/>
        <end position="422"/>
    </location>
</feature>
<feature type="helix" evidence="15">
    <location>
        <begin position="427"/>
        <end position="434"/>
    </location>
</feature>
<feature type="strand" evidence="15">
    <location>
        <begin position="435"/>
        <end position="438"/>
    </location>
</feature>
<feature type="helix" evidence="15">
    <location>
        <begin position="440"/>
        <end position="454"/>
    </location>
</feature>
<feature type="helix" evidence="15">
    <location>
        <begin position="461"/>
        <end position="468"/>
    </location>
</feature>
<feature type="helix" evidence="15">
    <location>
        <begin position="473"/>
        <end position="488"/>
    </location>
</feature>
<feature type="helix" evidence="15">
    <location>
        <begin position="495"/>
        <end position="504"/>
    </location>
</feature>
<feature type="helix" evidence="15">
    <location>
        <begin position="506"/>
        <end position="521"/>
    </location>
</feature>
<feature type="helix" evidence="15">
    <location>
        <begin position="528"/>
        <end position="535"/>
    </location>
</feature>
<feature type="turn" evidence="15">
    <location>
        <begin position="538"/>
        <end position="540"/>
    </location>
</feature>
<feature type="helix" evidence="15">
    <location>
        <begin position="541"/>
        <end position="555"/>
    </location>
</feature>
<feature type="helix" evidence="15">
    <location>
        <begin position="562"/>
        <end position="568"/>
    </location>
</feature>
<feature type="strand" evidence="15">
    <location>
        <begin position="569"/>
        <end position="571"/>
    </location>
</feature>
<feature type="helix" evidence="15">
    <location>
        <begin position="574"/>
        <end position="591"/>
    </location>
</feature>
<feature type="helix" evidence="15">
    <location>
        <begin position="597"/>
        <end position="603"/>
    </location>
</feature>
<feature type="helix" evidence="15">
    <location>
        <begin position="608"/>
        <end position="618"/>
    </location>
</feature>
<feature type="helix" evidence="15">
    <location>
        <begin position="620"/>
        <end position="622"/>
    </location>
</feature>
<feature type="turn" evidence="15">
    <location>
        <begin position="623"/>
        <end position="626"/>
    </location>
</feature>
<feature type="helix" evidence="15">
    <location>
        <begin position="631"/>
        <end position="637"/>
    </location>
</feature>
<feature type="helix" evidence="15">
    <location>
        <begin position="643"/>
        <end position="656"/>
    </location>
</feature>
<feature type="turn" evidence="15">
    <location>
        <begin position="657"/>
        <end position="659"/>
    </location>
</feature>
<feature type="helix" evidence="15">
    <location>
        <begin position="664"/>
        <end position="670"/>
    </location>
</feature>
<feature type="helix" evidence="15">
    <location>
        <begin position="676"/>
        <end position="686"/>
    </location>
</feature>
<feature type="helix" evidence="15">
    <location>
        <begin position="688"/>
        <end position="694"/>
    </location>
</feature>
<feature type="helix" evidence="15">
    <location>
        <begin position="699"/>
        <end position="702"/>
    </location>
</feature>
<feature type="turn" evidence="15">
    <location>
        <begin position="703"/>
        <end position="706"/>
    </location>
</feature>
<feature type="helix" evidence="15">
    <location>
        <begin position="711"/>
        <end position="727"/>
    </location>
</feature>
<feature type="helix" evidence="15">
    <location>
        <begin position="733"/>
        <end position="739"/>
    </location>
</feature>
<feature type="helix" evidence="15">
    <location>
        <begin position="744"/>
        <end position="754"/>
    </location>
</feature>
<feature type="helix" evidence="15">
    <location>
        <begin position="757"/>
        <end position="760"/>
    </location>
</feature>
<feature type="helix" evidence="15">
    <location>
        <begin position="766"/>
        <end position="769"/>
    </location>
</feature>
<feature type="turn" evidence="15">
    <location>
        <begin position="770"/>
        <end position="773"/>
    </location>
</feature>
<feature type="helix" evidence="15">
    <location>
        <begin position="778"/>
        <end position="788"/>
    </location>
</feature>
<feature type="helix" evidence="15">
    <location>
        <begin position="800"/>
        <end position="807"/>
    </location>
</feature>
<feature type="helix" evidence="15">
    <location>
        <begin position="812"/>
        <end position="826"/>
    </location>
</feature>
<feature type="strand" evidence="15">
    <location>
        <begin position="829"/>
        <end position="831"/>
    </location>
</feature>
<feature type="helix" evidence="15">
    <location>
        <begin position="835"/>
        <end position="841"/>
    </location>
</feature>
<feature type="helix" evidence="15">
    <location>
        <begin position="846"/>
        <end position="854"/>
    </location>
</feature>
<feature type="turn" evidence="15">
    <location>
        <begin position="855"/>
        <end position="859"/>
    </location>
</feature>
<feature type="turn" evidence="15">
    <location>
        <begin position="861"/>
        <end position="863"/>
    </location>
</feature>
<feature type="helix" evidence="15">
    <location>
        <begin position="868"/>
        <end position="875"/>
    </location>
</feature>
<feature type="helix" evidence="15">
    <location>
        <begin position="880"/>
        <end position="897"/>
    </location>
</feature>
<feature type="helix" evidence="15">
    <location>
        <begin position="902"/>
        <end position="909"/>
    </location>
</feature>
<feature type="helix" evidence="15">
    <location>
        <begin position="914"/>
        <end position="929"/>
    </location>
</feature>
<feature type="helix" evidence="15">
    <location>
        <begin position="936"/>
        <end position="943"/>
    </location>
</feature>
<feature type="helix" evidence="15">
    <location>
        <begin position="948"/>
        <end position="958"/>
    </location>
</feature>
<feature type="helix" evidence="15">
    <location>
        <begin position="960"/>
        <end position="964"/>
    </location>
</feature>
<feature type="helix" evidence="15">
    <location>
        <begin position="970"/>
        <end position="976"/>
    </location>
</feature>
<feature type="strand" evidence="15">
    <location>
        <begin position="979"/>
        <end position="981"/>
    </location>
</feature>
<feature type="turn" evidence="15">
    <location>
        <begin position="982"/>
        <end position="984"/>
    </location>
</feature>
<feature type="helix" evidence="15">
    <location>
        <begin position="985"/>
        <end position="997"/>
    </location>
</feature>
<feature type="turn" evidence="15">
    <location>
        <begin position="998"/>
        <end position="1000"/>
    </location>
</feature>
<feature type="helix" evidence="15">
    <location>
        <begin position="1004"/>
        <end position="1011"/>
    </location>
</feature>
<feature type="turn" evidence="15">
    <location>
        <begin position="1012"/>
        <end position="1014"/>
    </location>
</feature>
<feature type="helix" evidence="15">
    <location>
        <begin position="1015"/>
        <end position="1023"/>
    </location>
</feature>
<feature type="helix" evidence="15">
    <location>
        <begin position="1026"/>
        <end position="1031"/>
    </location>
</feature>
<feature type="turn" evidence="15">
    <location>
        <begin position="1037"/>
        <end position="1039"/>
    </location>
</feature>
<feature type="strand" evidence="15">
    <location>
        <begin position="1040"/>
        <end position="1042"/>
    </location>
</feature>
<sequence length="1373" mass="143535">MDPIRSRTPSPARELLPGPQPDRVQPTADRGGAPPAGGPLDGLPARRTMSRTRLPSPPAPSPAFSAGSFSDLLRQFDPSLLDTSLLDSMPAVGTPHTAAAPAECDEVQSGLRAADDPPPTVRVAVTAARPPRAKPAPRRRAAQPSDASPAAQVDLRTLGYSQQQQEKIKPKVGSTVAQHHEALVGHGFTHAHIVALSRHPAALGTVAVKYQDMIAALPEATHEDIVGVGKQWSGARALEALLTVAGELRGPPLQLDTGQLVKIAKRGGVTAVEAVHASRNALTGAPLNLTPAQVVAIASNNGGKQALETVQRLLPVLCQAHGLTPAQVVAIASHDGGKQALETMQRLLPVLCQAHGLPPDQVVAIASNIGGKQALETVQRLLPVLCQAHGLTPDQVVAIASHGGGKQALETVQRLLPVLCQAHGLTPDQVVAIASHDGGKQALETVQRLLPVLCQAHGLTPDQVVAIASNGGGKQALETVQRLLPVLCQAHGLTPDQVVAIASNGGKQALETVQRLLPVLCQAHGLTPDQVVAIASHDGGKQALETVQRLLPVLCQTHGLTPAQVVAIASHDGGKQALETVQQLLPVLCQAHGLTPDQVVAIASNIGGKQALATVQRLLPVLCQAHGLTPDQVVAIASNGGGKQALETVQRLLPVLCQAHGLTPDQVVAIASNGGGKQALETVQRLLPVLCQAHGLTQVQVVAIASNIGGKQALETVQRLLPVLCQAHGLTPAQVVAIASHDGGKQALETVQRLLPVLCQAHGLTPDQVVAIASNGGGKQALETVQRLLPVLCQAHGLTQEQVVAIASNNGGKQALETVQRLLPVLCQAHGLTPDQVVAIASNGGGKQALETVQRLLPVLCQAHGLTPAQVVAIASNIGGKQALETVQRLLPVLCQDHGLTLAQVVAIASNIGGKQALETVQRLLPVLCQAHGLTQDQVVAIASNIGGKQALETVQRLLPVLCQDHGLTPDQVVAIASNIGGKQALETVQRLLPVLCQDHGLTLDQVVAIASNGGKQALETVQRLLPVLCQDHGLTPDQVVAIASNSGGKQALETVQRLLPVLCQDHGLTPNQVVAIASNGGKQALESIVAQLSRPDPALAALTNDHLVALACLGGRPAMDAVKKGLPHAPELIRRVNRRIGERTSHRVADYAQVVRVLEFFQCHSHPAYAFDEAMTQFGMSRNGLVQLFRRVGVTELEARGGTLPPASQRWDRILQASGMKRAKPSPTSAQTPDQASLHAFADSLERDLDAPSPMHEGDQTGASSRKRSRSDRAVTGPSAQHSFEVRVPEQRDALHLPLSWRVKRPRTRIGGGLPDPGTPIAADLAASSTVMWEQDAAPFAGAADDFPAFNEEELAWLMELLPQSGSVGGTI</sequence>
<keyword id="KW-0002">3D-structure</keyword>
<keyword id="KW-0238">DNA-binding</keyword>
<keyword id="KW-1048">Host nucleus</keyword>
<keyword id="KW-0928">Hypersensitive response elicitation</keyword>
<keyword id="KW-0677">Repeat</keyword>
<keyword id="KW-0964">Secreted</keyword>
<keyword id="KW-0804">Transcription</keyword>
<keyword id="KW-0805">Transcription regulation</keyword>
<keyword id="KW-0843">Virulence</keyword>
<name>PTHX1_XANOP</name>
<protein>
    <recommendedName>
        <fullName evidence="11">TAL effector protein PthXo1</fullName>
    </recommendedName>
    <alternativeName>
        <fullName evidence="9">Avirulence protein PthXo1</fullName>
    </alternativeName>
    <alternativeName>
        <fullName evidence="10">TAL effector protein Tal2b</fullName>
    </alternativeName>
</protein>
<accession>B2SU53</accession>
<accession>Q6RKD2</accession>
<gene>
    <name type="primary">pthXo1</name>
    <name type="synonym">tal2b</name>
    <name type="ordered locus">PXO_00227</name>
</gene>
<organism>
    <name type="scientific">Xanthomonas oryzae pv. oryzae (strain PXO99A)</name>
    <dbReference type="NCBI Taxonomy" id="360094"/>
    <lineage>
        <taxon>Bacteria</taxon>
        <taxon>Pseudomonadati</taxon>
        <taxon>Pseudomonadota</taxon>
        <taxon>Gammaproteobacteria</taxon>
        <taxon>Lysobacterales</taxon>
        <taxon>Lysobacteraceae</taxon>
        <taxon>Xanthomonas</taxon>
    </lineage>
</organism>
<reference key="1">
    <citation type="journal article" date="2008" name="BMC Genomics">
        <title>Genome sequence and rapid evolution of the rice pathogen Xanthomonas oryzae pv. oryzae PXO99A.</title>
        <authorList>
            <person name="Salzberg S.L."/>
            <person name="Sommer D.D."/>
            <person name="Schatz M.C."/>
            <person name="Phillippy A.M."/>
            <person name="Rabinowicz P.D."/>
            <person name="Tsuge S."/>
            <person name="Furutani A."/>
            <person name="Ochiai H."/>
            <person name="Delcher A.L."/>
            <person name="Kelley D."/>
            <person name="Madupu R."/>
            <person name="Puiu D."/>
            <person name="Radune D."/>
            <person name="Shumway M."/>
            <person name="Trapnell C."/>
            <person name="Aparna G."/>
            <person name="Jha G."/>
            <person name="Pandey A."/>
            <person name="Patil P.B."/>
            <person name="Ishihara H."/>
            <person name="Meyer D.F."/>
            <person name="Szurek B."/>
            <person name="Verdier V."/>
            <person name="Koebnik R."/>
            <person name="Dow J.M."/>
            <person name="Ryan R.P."/>
            <person name="Hirata H."/>
            <person name="Tsuyumu S."/>
            <person name="Won Lee S."/>
            <person name="Seo Y.-S."/>
            <person name="Sriariyanum M."/>
            <person name="Ronald P.C."/>
            <person name="Sonti R.V."/>
            <person name="Van Sluys M.-A."/>
            <person name="Leach J.E."/>
            <person name="White F.F."/>
            <person name="Bogdanove A.J."/>
        </authorList>
    </citation>
    <scope>NUCLEOTIDE SEQUENCE [LARGE SCALE GENOMIC DNA]</scope>
    <source>
        <strain>PXO99A</strain>
    </source>
</reference>
<reference key="2">
    <citation type="journal article" date="2004" name="Mol. Plant Microbe Interact.">
        <title>Diverse members of the AvrBs3/PthA family of type III effectors are major virulence determinants in bacterial blight disease of rice.</title>
        <authorList>
            <person name="Yang B."/>
            <person name="White F.F."/>
        </authorList>
    </citation>
    <scope>NUCLEOTIDE SEQUENCE [GENOMIC DNA] OF 276-1241</scope>
    <scope>FUNCTION</scope>
    <scope>DISRUPTION PHENOTYPE</scope>
    <source>
        <strain>PXO99A</strain>
    </source>
</reference>
<reference key="3">
    <citation type="journal article" date="2006" name="Proc. Natl. Acad. Sci. U.S.A.">
        <title>Os8N3 is a host disease-susceptibility gene for bacterial blight of rice.</title>
        <authorList>
            <person name="Yang B."/>
            <person name="Sugio A."/>
            <person name="White F.F."/>
        </authorList>
    </citation>
    <scope>FUNCTION</scope>
    <scope>DISRUPTION PHENOTYPE</scope>
    <scope>INDUCTION OF HOST GENES</scope>
    <source>
        <strain>PXO99A</strain>
    </source>
</reference>
<reference key="4">
    <citation type="journal article" date="2010" name="New Phytol.">
        <title>Promoter elements of rice susceptibility genes are bound and activated by specific TAL effectors from the bacterial blight pathogen, Xanthomonas oryzae pv. oryzae.</title>
        <authorList>
            <person name="Roemer P."/>
            <person name="Recht S."/>
            <person name="Strauss T."/>
            <person name="Elsaesser J."/>
            <person name="Schornack S."/>
            <person name="Boch J."/>
            <person name="Wang S."/>
            <person name="Lahaye T."/>
        </authorList>
    </citation>
    <scope>FUNCTION</scope>
    <scope>DNA-BINDING</scope>
</reference>
<reference key="5">
    <citation type="journal article" date="2010" name="Genetics">
        <title>Targeting DNA double-strand breaks with TAL effector nucleases.</title>
        <authorList>
            <person name="Christian M."/>
            <person name="Cermak T."/>
            <person name="Doyle E.L."/>
            <person name="Schmidt C."/>
            <person name="Zhang F."/>
            <person name="Hummel A."/>
            <person name="Bogdanove A.J."/>
            <person name="Voytas D.F."/>
        </authorList>
    </citation>
    <scope>BIOTECHNOLOGY</scope>
</reference>
<reference key="6">
    <citation type="journal article" date="2014" name="Biochem. J.">
        <title>TALEN-mediated genome editing: prospects and perspectives.</title>
        <authorList>
            <person name="Wright D.A."/>
            <person name="Li T."/>
            <person name="Yang B."/>
            <person name="Spalding M.H."/>
        </authorList>
    </citation>
    <scope>BIOTECHNOLOGY USES REVIEW</scope>
</reference>
<reference key="7">
    <citation type="journal article" date="2014" name="Plant J.">
        <title>From dead leaf, to new life: TAL effectors as tools for synthetic biology.</title>
        <authorList>
            <person name="de Lange O."/>
            <person name="Binder A."/>
            <person name="Lahaye T."/>
        </authorList>
    </citation>
    <scope>BIOTECHNOLOGY USES REVIEW</scope>
</reference>
<reference key="8">
    <citation type="journal article" date="2012" name="Science">
        <title>The crystal structure of TAL effector PthXo1 bound to its DNA target.</title>
        <authorList>
            <person name="Mak A.N."/>
            <person name="Bradley P."/>
            <person name="Cernadas R.A."/>
            <person name="Bogdanove A.J."/>
            <person name="Stoddard B.L."/>
        </authorList>
    </citation>
    <scope>X-RAY CRYSTALLOGRAPHY (3.00 ANGSTROMS) OF 127-1149 IN COMPLEX WITH DNA</scope>
    <scope>DNA-BINDING</scope>
    <scope>DOMAIN</scope>
    <source>
        <strain>PXO99A</strain>
    </source>
</reference>